<organism>
    <name type="scientific">Lactobacillus gasseri (strain ATCC 33323 / DSM 20243 / BCRC 14619 / CIP 102991 / JCM 1131 / KCTC 3163 / NCIMB 11718 / NCTC 13722 / AM63)</name>
    <dbReference type="NCBI Taxonomy" id="324831"/>
    <lineage>
        <taxon>Bacteria</taxon>
        <taxon>Bacillati</taxon>
        <taxon>Bacillota</taxon>
        <taxon>Bacilli</taxon>
        <taxon>Lactobacillales</taxon>
        <taxon>Lactobacillaceae</taxon>
        <taxon>Lactobacillus</taxon>
    </lineage>
</organism>
<name>HPRK_LACGA</name>
<accession>Q042D2</accession>
<proteinExistence type="inferred from homology"/>
<sequence>MVEAVKVSELVKDVPSLKIIEGKEYLSQKLIDTSDISRPGLELTGYFDFYPKNRIQLLGRTEISYSARLDHDLRERVFNKMATPETPCFIVSRGLPIPSEMLEAAEKEKIPVFSSNMATTHLSSVITQFLDEKLAPRKSIHGVLVEIYGMGVLIIGNSGVGKSETALDLVKRGHRLIADDRVDVYQKDDKTVVGEAPKILKHLMEIRGIGIIDVMNLFGAGAVKDSTEIQLIICLQNWDPKANYDRLGFNEKTREIFEVDVPQVTVPVKVGRNLAIIIEVAAMNFRAKKMGYDASQKFEQNLTELISDNSKKDEGESKK</sequence>
<evidence type="ECO:0000255" key="1">
    <source>
        <dbReference type="HAMAP-Rule" id="MF_01249"/>
    </source>
</evidence>
<comment type="function">
    <text evidence="1">Catalyzes the ATP- as well as the pyrophosphate-dependent phosphorylation of a specific serine residue in HPr, a phosphocarrier protein of the phosphoenolpyruvate-dependent sugar phosphotransferase system (PTS). HprK/P also catalyzes the pyrophosphate-producing, inorganic phosphate-dependent dephosphorylation (phosphorolysis) of seryl-phosphorylated HPr (P-Ser-HPr). The two antagonistic activities of HprK/P are regulated by several intracellular metabolites, which change their concentration in response to the absence or presence of rapidly metabolisable carbon sources (glucose, fructose, etc.) in the growth medium. Therefore, by controlling the phosphorylation state of HPr, HPrK/P is a sensor enzyme that plays a major role in the regulation of carbon metabolism and sugar transport: it mediates carbon catabolite repression (CCR), and regulates PTS-catalyzed carbohydrate uptake and inducer exclusion.</text>
</comment>
<comment type="catalytic activity">
    <reaction evidence="1">
        <text>[HPr protein]-L-serine + ATP = [HPr protein]-O-phospho-L-serine + ADP + H(+)</text>
        <dbReference type="Rhea" id="RHEA:46600"/>
        <dbReference type="Rhea" id="RHEA-COMP:11602"/>
        <dbReference type="Rhea" id="RHEA-COMP:11603"/>
        <dbReference type="ChEBI" id="CHEBI:15378"/>
        <dbReference type="ChEBI" id="CHEBI:29999"/>
        <dbReference type="ChEBI" id="CHEBI:30616"/>
        <dbReference type="ChEBI" id="CHEBI:83421"/>
        <dbReference type="ChEBI" id="CHEBI:456216"/>
    </reaction>
</comment>
<comment type="catalytic activity">
    <reaction evidence="1">
        <text>[HPr protein]-O-phospho-L-serine + phosphate + H(+) = [HPr protein]-L-serine + diphosphate</text>
        <dbReference type="Rhea" id="RHEA:46604"/>
        <dbReference type="Rhea" id="RHEA-COMP:11602"/>
        <dbReference type="Rhea" id="RHEA-COMP:11603"/>
        <dbReference type="ChEBI" id="CHEBI:15378"/>
        <dbReference type="ChEBI" id="CHEBI:29999"/>
        <dbReference type="ChEBI" id="CHEBI:33019"/>
        <dbReference type="ChEBI" id="CHEBI:43474"/>
        <dbReference type="ChEBI" id="CHEBI:83421"/>
    </reaction>
</comment>
<comment type="cofactor">
    <cofactor evidence="1">
        <name>Mg(2+)</name>
        <dbReference type="ChEBI" id="CHEBI:18420"/>
    </cofactor>
</comment>
<comment type="subunit">
    <text evidence="1">Homohexamer.</text>
</comment>
<comment type="domain">
    <text evidence="1">The Walker A ATP-binding motif also binds Pi and PPi.</text>
</comment>
<comment type="miscellaneous">
    <text evidence="1">Both phosphorylation and phosphorolysis are carried out by the same active site and suggest a common mechanism for both reactions.</text>
</comment>
<comment type="similarity">
    <text evidence="1">Belongs to the HPrK/P family.</text>
</comment>
<dbReference type="EC" id="2.7.11.-" evidence="1"/>
<dbReference type="EC" id="2.7.4.-" evidence="1"/>
<dbReference type="EMBL" id="CP000413">
    <property type="protein sequence ID" value="ABJ60690.1"/>
    <property type="molecule type" value="Genomic_DNA"/>
</dbReference>
<dbReference type="RefSeq" id="WP_003646995.1">
    <property type="nucleotide sequence ID" value="NZ_WBMG01000003.1"/>
</dbReference>
<dbReference type="SMR" id="Q042D2"/>
<dbReference type="GeneID" id="29638864"/>
<dbReference type="KEGG" id="lga:LGAS_1328"/>
<dbReference type="HOGENOM" id="CLU_052030_0_1_9"/>
<dbReference type="BioCyc" id="LGAS324831:G1G6Y-1322-MONOMER"/>
<dbReference type="Proteomes" id="UP000000664">
    <property type="component" value="Chromosome"/>
</dbReference>
<dbReference type="GO" id="GO:0005524">
    <property type="term" value="F:ATP binding"/>
    <property type="evidence" value="ECO:0007669"/>
    <property type="project" value="UniProtKB-UniRule"/>
</dbReference>
<dbReference type="GO" id="GO:0000287">
    <property type="term" value="F:magnesium ion binding"/>
    <property type="evidence" value="ECO:0007669"/>
    <property type="project" value="UniProtKB-UniRule"/>
</dbReference>
<dbReference type="GO" id="GO:0000155">
    <property type="term" value="F:phosphorelay sensor kinase activity"/>
    <property type="evidence" value="ECO:0007669"/>
    <property type="project" value="InterPro"/>
</dbReference>
<dbReference type="GO" id="GO:0004674">
    <property type="term" value="F:protein serine/threonine kinase activity"/>
    <property type="evidence" value="ECO:0007669"/>
    <property type="project" value="UniProtKB-KW"/>
</dbReference>
<dbReference type="GO" id="GO:0004712">
    <property type="term" value="F:protein serine/threonine/tyrosine kinase activity"/>
    <property type="evidence" value="ECO:0007669"/>
    <property type="project" value="UniProtKB-UniRule"/>
</dbReference>
<dbReference type="GO" id="GO:0006109">
    <property type="term" value="P:regulation of carbohydrate metabolic process"/>
    <property type="evidence" value="ECO:0007669"/>
    <property type="project" value="UniProtKB-UniRule"/>
</dbReference>
<dbReference type="CDD" id="cd01918">
    <property type="entry name" value="HprK_C"/>
    <property type="match status" value="1"/>
</dbReference>
<dbReference type="FunFam" id="3.40.50.300:FF:000174">
    <property type="entry name" value="HPr kinase/phosphorylase"/>
    <property type="match status" value="1"/>
</dbReference>
<dbReference type="Gene3D" id="3.40.1390.20">
    <property type="entry name" value="HprK N-terminal domain-like"/>
    <property type="match status" value="1"/>
</dbReference>
<dbReference type="Gene3D" id="3.40.50.300">
    <property type="entry name" value="P-loop containing nucleotide triphosphate hydrolases"/>
    <property type="match status" value="1"/>
</dbReference>
<dbReference type="HAMAP" id="MF_01249">
    <property type="entry name" value="HPr_kinase"/>
    <property type="match status" value="1"/>
</dbReference>
<dbReference type="InterPro" id="IPR003755">
    <property type="entry name" value="HPr(Ser)_kin/Pase"/>
</dbReference>
<dbReference type="InterPro" id="IPR011104">
    <property type="entry name" value="Hpr_kin/Pase_C"/>
</dbReference>
<dbReference type="InterPro" id="IPR011126">
    <property type="entry name" value="Hpr_kin/Pase_Hpr_N"/>
</dbReference>
<dbReference type="InterPro" id="IPR027417">
    <property type="entry name" value="P-loop_NTPase"/>
</dbReference>
<dbReference type="InterPro" id="IPR028979">
    <property type="entry name" value="Ser_kin/Pase_Hpr-like_N_sf"/>
</dbReference>
<dbReference type="NCBIfam" id="TIGR00679">
    <property type="entry name" value="hpr-ser"/>
    <property type="match status" value="1"/>
</dbReference>
<dbReference type="PANTHER" id="PTHR30305:SF1">
    <property type="entry name" value="HPR KINASE_PHOSPHORYLASE"/>
    <property type="match status" value="1"/>
</dbReference>
<dbReference type="PANTHER" id="PTHR30305">
    <property type="entry name" value="PROTEIN YJDM-RELATED"/>
    <property type="match status" value="1"/>
</dbReference>
<dbReference type="Pfam" id="PF07475">
    <property type="entry name" value="Hpr_kinase_C"/>
    <property type="match status" value="1"/>
</dbReference>
<dbReference type="Pfam" id="PF02603">
    <property type="entry name" value="Hpr_kinase_N"/>
    <property type="match status" value="1"/>
</dbReference>
<dbReference type="SUPFAM" id="SSF75138">
    <property type="entry name" value="HprK N-terminal domain-like"/>
    <property type="match status" value="1"/>
</dbReference>
<dbReference type="SUPFAM" id="SSF53795">
    <property type="entry name" value="PEP carboxykinase-like"/>
    <property type="match status" value="1"/>
</dbReference>
<keyword id="KW-0067">ATP-binding</keyword>
<keyword id="KW-0119">Carbohydrate metabolism</keyword>
<keyword id="KW-0418">Kinase</keyword>
<keyword id="KW-0460">Magnesium</keyword>
<keyword id="KW-0479">Metal-binding</keyword>
<keyword id="KW-0511">Multifunctional enzyme</keyword>
<keyword id="KW-0547">Nucleotide-binding</keyword>
<keyword id="KW-0723">Serine/threonine-protein kinase</keyword>
<keyword id="KW-0808">Transferase</keyword>
<protein>
    <recommendedName>
        <fullName evidence="1">HPr kinase/phosphorylase</fullName>
        <shortName evidence="1">HPrK/P</shortName>
        <ecNumber evidence="1">2.7.11.-</ecNumber>
        <ecNumber evidence="1">2.7.4.-</ecNumber>
    </recommendedName>
    <alternativeName>
        <fullName evidence="1">HPr(Ser) kinase/phosphorylase</fullName>
    </alternativeName>
</protein>
<gene>
    <name evidence="1" type="primary">hprK</name>
    <name type="ordered locus">LGAS_1328</name>
</gene>
<reference key="1">
    <citation type="journal article" date="2006" name="Proc. Natl. Acad. Sci. U.S.A.">
        <title>Comparative genomics of the lactic acid bacteria.</title>
        <authorList>
            <person name="Makarova K.S."/>
            <person name="Slesarev A."/>
            <person name="Wolf Y.I."/>
            <person name="Sorokin A."/>
            <person name="Mirkin B."/>
            <person name="Koonin E.V."/>
            <person name="Pavlov A."/>
            <person name="Pavlova N."/>
            <person name="Karamychev V."/>
            <person name="Polouchine N."/>
            <person name="Shakhova V."/>
            <person name="Grigoriev I."/>
            <person name="Lou Y."/>
            <person name="Rohksar D."/>
            <person name="Lucas S."/>
            <person name="Huang K."/>
            <person name="Goodstein D.M."/>
            <person name="Hawkins T."/>
            <person name="Plengvidhya V."/>
            <person name="Welker D."/>
            <person name="Hughes J."/>
            <person name="Goh Y."/>
            <person name="Benson A."/>
            <person name="Baldwin K."/>
            <person name="Lee J.-H."/>
            <person name="Diaz-Muniz I."/>
            <person name="Dosti B."/>
            <person name="Smeianov V."/>
            <person name="Wechter W."/>
            <person name="Barabote R."/>
            <person name="Lorca G."/>
            <person name="Altermann E."/>
            <person name="Barrangou R."/>
            <person name="Ganesan B."/>
            <person name="Xie Y."/>
            <person name="Rawsthorne H."/>
            <person name="Tamir D."/>
            <person name="Parker C."/>
            <person name="Breidt F."/>
            <person name="Broadbent J.R."/>
            <person name="Hutkins R."/>
            <person name="O'Sullivan D."/>
            <person name="Steele J."/>
            <person name="Unlu G."/>
            <person name="Saier M.H. Jr."/>
            <person name="Klaenhammer T."/>
            <person name="Richardson P."/>
            <person name="Kozyavkin S."/>
            <person name="Weimer B.C."/>
            <person name="Mills D.A."/>
        </authorList>
    </citation>
    <scope>NUCLEOTIDE SEQUENCE [LARGE SCALE GENOMIC DNA]</scope>
    <source>
        <strain>ATCC 33323 / DSM 20243 / BCRC 14619 / CIP 102991 / JCM 1131 / KCTC 3163 / NCIMB 11718 / NCTC 13722 / AM63</strain>
    </source>
</reference>
<feature type="chain" id="PRO_1000067152" description="HPr kinase/phosphorylase">
    <location>
        <begin position="1"/>
        <end position="319"/>
    </location>
</feature>
<feature type="region of interest" description="Important for the catalytic mechanism of both phosphorylation and dephosphorylation" evidence="1">
    <location>
        <begin position="204"/>
        <end position="213"/>
    </location>
</feature>
<feature type="region of interest" description="Important for the catalytic mechanism of dephosphorylation" evidence="1">
    <location>
        <begin position="267"/>
        <end position="272"/>
    </location>
</feature>
<feature type="active site" evidence="1">
    <location>
        <position position="141"/>
    </location>
</feature>
<feature type="active site" evidence="1">
    <location>
        <position position="162"/>
    </location>
</feature>
<feature type="active site" description="Proton acceptor; for phosphorylation activity. Proton donor; for dephosphorylation activity" evidence="1">
    <location>
        <position position="180"/>
    </location>
</feature>
<feature type="active site" evidence="1">
    <location>
        <position position="246"/>
    </location>
</feature>
<feature type="binding site" evidence="1">
    <location>
        <begin position="156"/>
        <end position="163"/>
    </location>
    <ligand>
        <name>ATP</name>
        <dbReference type="ChEBI" id="CHEBI:30616"/>
    </ligand>
</feature>
<feature type="binding site" evidence="1">
    <location>
        <position position="163"/>
    </location>
    <ligand>
        <name>Mg(2+)</name>
        <dbReference type="ChEBI" id="CHEBI:18420"/>
    </ligand>
</feature>
<feature type="binding site" evidence="1">
    <location>
        <position position="205"/>
    </location>
    <ligand>
        <name>Mg(2+)</name>
        <dbReference type="ChEBI" id="CHEBI:18420"/>
    </ligand>
</feature>